<feature type="chain" id="PRO_1000001929" description="Glutamate--tRNA ligase">
    <location>
        <begin position="1"/>
        <end position="495"/>
    </location>
</feature>
<feature type="short sequence motif" description="'HIGH' region" evidence="1">
    <location>
        <begin position="12"/>
        <end position="22"/>
    </location>
</feature>
<feature type="short sequence motif" description="'KMSKS' region" evidence="1">
    <location>
        <begin position="259"/>
        <end position="263"/>
    </location>
</feature>
<feature type="binding site" evidence="1">
    <location>
        <position position="262"/>
    </location>
    <ligand>
        <name>ATP</name>
        <dbReference type="ChEBI" id="CHEBI:30616"/>
    </ligand>
</feature>
<dbReference type="EC" id="6.1.1.17" evidence="1"/>
<dbReference type="EMBL" id="CP000422">
    <property type="protein sequence ID" value="ABJ68532.1"/>
    <property type="molecule type" value="Genomic_DNA"/>
</dbReference>
<dbReference type="RefSeq" id="WP_002833250.1">
    <property type="nucleotide sequence ID" value="NC_008525.1"/>
</dbReference>
<dbReference type="SMR" id="Q03E40"/>
<dbReference type="STRING" id="278197.PEPE_1501"/>
<dbReference type="GeneID" id="33062710"/>
<dbReference type="KEGG" id="ppe:PEPE_1501"/>
<dbReference type="eggNOG" id="COG0008">
    <property type="taxonomic scope" value="Bacteria"/>
</dbReference>
<dbReference type="HOGENOM" id="CLU_015768_6_1_9"/>
<dbReference type="OrthoDB" id="9807503at2"/>
<dbReference type="Proteomes" id="UP000000773">
    <property type="component" value="Chromosome"/>
</dbReference>
<dbReference type="GO" id="GO:0005829">
    <property type="term" value="C:cytosol"/>
    <property type="evidence" value="ECO:0007669"/>
    <property type="project" value="TreeGrafter"/>
</dbReference>
<dbReference type="GO" id="GO:0005524">
    <property type="term" value="F:ATP binding"/>
    <property type="evidence" value="ECO:0007669"/>
    <property type="project" value="UniProtKB-UniRule"/>
</dbReference>
<dbReference type="GO" id="GO:0004818">
    <property type="term" value="F:glutamate-tRNA ligase activity"/>
    <property type="evidence" value="ECO:0007669"/>
    <property type="project" value="UniProtKB-UniRule"/>
</dbReference>
<dbReference type="GO" id="GO:0000049">
    <property type="term" value="F:tRNA binding"/>
    <property type="evidence" value="ECO:0007669"/>
    <property type="project" value="InterPro"/>
</dbReference>
<dbReference type="GO" id="GO:0008270">
    <property type="term" value="F:zinc ion binding"/>
    <property type="evidence" value="ECO:0007669"/>
    <property type="project" value="InterPro"/>
</dbReference>
<dbReference type="GO" id="GO:0006424">
    <property type="term" value="P:glutamyl-tRNA aminoacylation"/>
    <property type="evidence" value="ECO:0007669"/>
    <property type="project" value="UniProtKB-UniRule"/>
</dbReference>
<dbReference type="CDD" id="cd00808">
    <property type="entry name" value="GluRS_core"/>
    <property type="match status" value="1"/>
</dbReference>
<dbReference type="FunFam" id="1.10.10.350:FF:000002">
    <property type="entry name" value="Glutamate--tRNA ligase"/>
    <property type="match status" value="1"/>
</dbReference>
<dbReference type="FunFam" id="3.40.50.620:FF:000007">
    <property type="entry name" value="Glutamate--tRNA ligase"/>
    <property type="match status" value="1"/>
</dbReference>
<dbReference type="Gene3D" id="1.10.10.350">
    <property type="match status" value="1"/>
</dbReference>
<dbReference type="Gene3D" id="3.40.50.620">
    <property type="entry name" value="HUPs"/>
    <property type="match status" value="1"/>
</dbReference>
<dbReference type="HAMAP" id="MF_00022">
    <property type="entry name" value="Glu_tRNA_synth_type1"/>
    <property type="match status" value="1"/>
</dbReference>
<dbReference type="InterPro" id="IPR045462">
    <property type="entry name" value="aa-tRNA-synth_I_cd-bd"/>
</dbReference>
<dbReference type="InterPro" id="IPR020751">
    <property type="entry name" value="aa-tRNA-synth_I_codon-bd_sub2"/>
</dbReference>
<dbReference type="InterPro" id="IPR001412">
    <property type="entry name" value="aa-tRNA-synth_I_CS"/>
</dbReference>
<dbReference type="InterPro" id="IPR008925">
    <property type="entry name" value="aa_tRNA-synth_I_cd-bd_sf"/>
</dbReference>
<dbReference type="InterPro" id="IPR004527">
    <property type="entry name" value="Glu-tRNA-ligase_bac/mito"/>
</dbReference>
<dbReference type="InterPro" id="IPR000924">
    <property type="entry name" value="Glu/Gln-tRNA-synth"/>
</dbReference>
<dbReference type="InterPro" id="IPR020058">
    <property type="entry name" value="Glu/Gln-tRNA-synth_Ib_cat-dom"/>
</dbReference>
<dbReference type="InterPro" id="IPR049940">
    <property type="entry name" value="GluQ/Sye"/>
</dbReference>
<dbReference type="InterPro" id="IPR033910">
    <property type="entry name" value="GluRS_core"/>
</dbReference>
<dbReference type="InterPro" id="IPR014729">
    <property type="entry name" value="Rossmann-like_a/b/a_fold"/>
</dbReference>
<dbReference type="NCBIfam" id="TIGR00464">
    <property type="entry name" value="gltX_bact"/>
    <property type="match status" value="1"/>
</dbReference>
<dbReference type="PANTHER" id="PTHR43311">
    <property type="entry name" value="GLUTAMATE--TRNA LIGASE"/>
    <property type="match status" value="1"/>
</dbReference>
<dbReference type="PANTHER" id="PTHR43311:SF2">
    <property type="entry name" value="GLUTAMATE--TRNA LIGASE, MITOCHONDRIAL-RELATED"/>
    <property type="match status" value="1"/>
</dbReference>
<dbReference type="Pfam" id="PF19269">
    <property type="entry name" value="Anticodon_2"/>
    <property type="match status" value="1"/>
</dbReference>
<dbReference type="Pfam" id="PF00749">
    <property type="entry name" value="tRNA-synt_1c"/>
    <property type="match status" value="1"/>
</dbReference>
<dbReference type="PRINTS" id="PR00987">
    <property type="entry name" value="TRNASYNTHGLU"/>
</dbReference>
<dbReference type="SUPFAM" id="SSF48163">
    <property type="entry name" value="An anticodon-binding domain of class I aminoacyl-tRNA synthetases"/>
    <property type="match status" value="1"/>
</dbReference>
<dbReference type="SUPFAM" id="SSF52374">
    <property type="entry name" value="Nucleotidylyl transferase"/>
    <property type="match status" value="1"/>
</dbReference>
<dbReference type="PROSITE" id="PS00178">
    <property type="entry name" value="AA_TRNA_LIGASE_I"/>
    <property type="match status" value="1"/>
</dbReference>
<comment type="function">
    <text evidence="1">Catalyzes the attachment of glutamate to tRNA(Glu) in a two-step reaction: glutamate is first activated by ATP to form Glu-AMP and then transferred to the acceptor end of tRNA(Glu).</text>
</comment>
<comment type="catalytic activity">
    <reaction evidence="1">
        <text>tRNA(Glu) + L-glutamate + ATP = L-glutamyl-tRNA(Glu) + AMP + diphosphate</text>
        <dbReference type="Rhea" id="RHEA:23540"/>
        <dbReference type="Rhea" id="RHEA-COMP:9663"/>
        <dbReference type="Rhea" id="RHEA-COMP:9680"/>
        <dbReference type="ChEBI" id="CHEBI:29985"/>
        <dbReference type="ChEBI" id="CHEBI:30616"/>
        <dbReference type="ChEBI" id="CHEBI:33019"/>
        <dbReference type="ChEBI" id="CHEBI:78442"/>
        <dbReference type="ChEBI" id="CHEBI:78520"/>
        <dbReference type="ChEBI" id="CHEBI:456215"/>
        <dbReference type="EC" id="6.1.1.17"/>
    </reaction>
</comment>
<comment type="subunit">
    <text evidence="1">Monomer.</text>
</comment>
<comment type="subcellular location">
    <subcellularLocation>
        <location evidence="1">Cytoplasm</location>
    </subcellularLocation>
</comment>
<comment type="similarity">
    <text evidence="1">Belongs to the class-I aminoacyl-tRNA synthetase family. Glutamate--tRNA ligase type 1 subfamily.</text>
</comment>
<gene>
    <name evidence="1" type="primary">gltX</name>
    <name type="ordered locus">PEPE_1501</name>
</gene>
<proteinExistence type="inferred from homology"/>
<evidence type="ECO:0000255" key="1">
    <source>
        <dbReference type="HAMAP-Rule" id="MF_00022"/>
    </source>
</evidence>
<sequence>MAKQKIRVRYAPSPTGHLHIGNARTALFNYLFARHYKGKFILRIEDTDQSRNIADGEKSQIDNLKWLGMDWDEGPDKPGEYGPYRQSERKGIYQPLIDQLVAEGKAYESYMTEEELAAQREEQKANGEMPHYVDEYAGLSPEQKEQKIADAKAAGIEPVIRFKVPTNTTYEWDDLVKGHISFESETIGGDFVIQKRDGMPTYNFAVVVDDHMMEISHVFRGDDHVANTPKQLMIYEALGWDAPQFGHMSLIINTETGKKLSKRDESILQFIEQYRSLGYLPEAMLNFIILLGWSPVGESEIFTLREFVKMYDEKRLSKSPAAFDAKKLEWINNQYVKAADEDRIMHSALLQLINAGKIEKNPAPMKVEWARKLINLFKRQMSYTAQIVEFTELFFNGPENIDEEAKEELATDDALPVLKALEKQFSDLPVFDTVNILAAIKAVQKETGIKGRKLWMPIRIAITHEMHGPELPESLELLGYELSMQHLRAMIEELS</sequence>
<organism>
    <name type="scientific">Pediococcus pentosaceus (strain ATCC 25745 / CCUG 21536 / LMG 10740 / 183-1w)</name>
    <dbReference type="NCBI Taxonomy" id="278197"/>
    <lineage>
        <taxon>Bacteria</taxon>
        <taxon>Bacillati</taxon>
        <taxon>Bacillota</taxon>
        <taxon>Bacilli</taxon>
        <taxon>Lactobacillales</taxon>
        <taxon>Lactobacillaceae</taxon>
        <taxon>Pediococcus</taxon>
    </lineage>
</organism>
<reference key="1">
    <citation type="journal article" date="2006" name="Proc. Natl. Acad. Sci. U.S.A.">
        <title>Comparative genomics of the lactic acid bacteria.</title>
        <authorList>
            <person name="Makarova K.S."/>
            <person name="Slesarev A."/>
            <person name="Wolf Y.I."/>
            <person name="Sorokin A."/>
            <person name="Mirkin B."/>
            <person name="Koonin E.V."/>
            <person name="Pavlov A."/>
            <person name="Pavlova N."/>
            <person name="Karamychev V."/>
            <person name="Polouchine N."/>
            <person name="Shakhova V."/>
            <person name="Grigoriev I."/>
            <person name="Lou Y."/>
            <person name="Rohksar D."/>
            <person name="Lucas S."/>
            <person name="Huang K."/>
            <person name="Goodstein D.M."/>
            <person name="Hawkins T."/>
            <person name="Plengvidhya V."/>
            <person name="Welker D."/>
            <person name="Hughes J."/>
            <person name="Goh Y."/>
            <person name="Benson A."/>
            <person name="Baldwin K."/>
            <person name="Lee J.-H."/>
            <person name="Diaz-Muniz I."/>
            <person name="Dosti B."/>
            <person name="Smeianov V."/>
            <person name="Wechter W."/>
            <person name="Barabote R."/>
            <person name="Lorca G."/>
            <person name="Altermann E."/>
            <person name="Barrangou R."/>
            <person name="Ganesan B."/>
            <person name="Xie Y."/>
            <person name="Rawsthorne H."/>
            <person name="Tamir D."/>
            <person name="Parker C."/>
            <person name="Breidt F."/>
            <person name="Broadbent J.R."/>
            <person name="Hutkins R."/>
            <person name="O'Sullivan D."/>
            <person name="Steele J."/>
            <person name="Unlu G."/>
            <person name="Saier M.H. Jr."/>
            <person name="Klaenhammer T."/>
            <person name="Richardson P."/>
            <person name="Kozyavkin S."/>
            <person name="Weimer B.C."/>
            <person name="Mills D.A."/>
        </authorList>
    </citation>
    <scope>NUCLEOTIDE SEQUENCE [LARGE SCALE GENOMIC DNA]</scope>
    <source>
        <strain>ATCC 25745 / CCUG 21536 / LMG 10740 / 183-1w</strain>
    </source>
</reference>
<protein>
    <recommendedName>
        <fullName evidence="1">Glutamate--tRNA ligase</fullName>
        <ecNumber evidence="1">6.1.1.17</ecNumber>
    </recommendedName>
    <alternativeName>
        <fullName evidence="1">Glutamyl-tRNA synthetase</fullName>
        <shortName evidence="1">GluRS</shortName>
    </alternativeName>
</protein>
<keyword id="KW-0030">Aminoacyl-tRNA synthetase</keyword>
<keyword id="KW-0067">ATP-binding</keyword>
<keyword id="KW-0963">Cytoplasm</keyword>
<keyword id="KW-0436">Ligase</keyword>
<keyword id="KW-0547">Nucleotide-binding</keyword>
<keyword id="KW-0648">Protein biosynthesis</keyword>
<accession>Q03E40</accession>
<name>SYE_PEDPA</name>